<gene>
    <name evidence="1" type="primary">sgrR</name>
    <name type="ordered locus">ECA3841</name>
</gene>
<evidence type="ECO:0000255" key="1">
    <source>
        <dbReference type="HAMAP-Rule" id="MF_01449"/>
    </source>
</evidence>
<sequence length="552" mass="64712">MSSPRLQQQFIRLWQHFQGQTTDTTLQELTGVLNCSRRHIRSLLNAMQLEGWLIWQAEAGRGKRSQLSFVYTGLALQQQRAEDLLEQDRIEQLVQLVGDKEAVRQMLLSHLGRSFRQGKHILRILYYRPLRNLLPSSALRRSEMHIARQIFSGLTNINEENGELKPDLAHHWQMLAPLHWRFYLRPAIRFHHGRELTMDDITTSLSRLIPLPLFSHIEAVNSPMPFVIDIRLSSPDKWLPWLLASVHAMILPQEWQTLPNFAQHPIGTGPYAVVRNNSSQLKIRAFDDYFGYRALIDEVNIWVLPDEPEEMPVSVQFQSDDSHHEQLESRMEEGGYFLLFDKRSPLNQRPEALRWLRQVFNPVSLLSHANTSNQRDWSPAYSLLPRWHHHHPDTPQSIPDGLTDVTLTFYQEHPEYRILSEIMRTLLAQQGVTLHLQTISYEDWYQGNAESDIWFGSLNCYLPLEFSLFAMLYELPLVQHCLNDDLDTDAQQWRSHTLPMAEWCEKLIKSGQLHPLLHHWLQLQGQRSMRGVRMNMLGWFDFKSAWFAPPER</sequence>
<reference key="1">
    <citation type="journal article" date="2004" name="Proc. Natl. Acad. Sci. U.S.A.">
        <title>Genome sequence of the enterobacterial phytopathogen Erwinia carotovora subsp. atroseptica and characterization of virulence factors.</title>
        <authorList>
            <person name="Bell K.S."/>
            <person name="Sebaihia M."/>
            <person name="Pritchard L."/>
            <person name="Holden M.T.G."/>
            <person name="Hyman L.J."/>
            <person name="Holeva M.C."/>
            <person name="Thomson N.R."/>
            <person name="Bentley S.D."/>
            <person name="Churcher L.J.C."/>
            <person name="Mungall K."/>
            <person name="Atkin R."/>
            <person name="Bason N."/>
            <person name="Brooks K."/>
            <person name="Chillingworth T."/>
            <person name="Clark K."/>
            <person name="Doggett J."/>
            <person name="Fraser A."/>
            <person name="Hance Z."/>
            <person name="Hauser H."/>
            <person name="Jagels K."/>
            <person name="Moule S."/>
            <person name="Norbertczak H."/>
            <person name="Ormond D."/>
            <person name="Price C."/>
            <person name="Quail M.A."/>
            <person name="Sanders M."/>
            <person name="Walker D."/>
            <person name="Whitehead S."/>
            <person name="Salmond G.P.C."/>
            <person name="Birch P.R.J."/>
            <person name="Parkhill J."/>
            <person name="Toth I.K."/>
        </authorList>
    </citation>
    <scope>NUCLEOTIDE SEQUENCE [LARGE SCALE GENOMIC DNA]</scope>
    <source>
        <strain>SCRI 1043 / ATCC BAA-672</strain>
    </source>
</reference>
<protein>
    <recommendedName>
        <fullName evidence="1">HTH-type transcriptional regulator SgrR</fullName>
    </recommendedName>
</protein>
<keyword id="KW-0010">Activator</keyword>
<keyword id="KW-0238">DNA-binding</keyword>
<keyword id="KW-1185">Reference proteome</keyword>
<keyword id="KW-0678">Repressor</keyword>
<keyword id="KW-0804">Transcription</keyword>
<keyword id="KW-0805">Transcription regulation</keyword>
<name>SGRR_PECAS</name>
<feature type="chain" id="PRO_0000309240" description="HTH-type transcriptional regulator SgrR">
    <location>
        <begin position="1"/>
        <end position="552"/>
    </location>
</feature>
<feature type="region of interest" description="Solute-binding" evidence="1">
    <location>
        <begin position="163"/>
        <end position="493"/>
    </location>
</feature>
<dbReference type="EMBL" id="BX950851">
    <property type="protein sequence ID" value="CAG76739.1"/>
    <property type="molecule type" value="Genomic_DNA"/>
</dbReference>
<dbReference type="RefSeq" id="WP_011095339.1">
    <property type="nucleotide sequence ID" value="NC_004547.2"/>
</dbReference>
<dbReference type="SMR" id="Q6D0F8"/>
<dbReference type="STRING" id="218491.ECA3841"/>
<dbReference type="KEGG" id="eca:ECA3841"/>
<dbReference type="PATRIC" id="fig|218491.5.peg.3896"/>
<dbReference type="eggNOG" id="COG4533">
    <property type="taxonomic scope" value="Bacteria"/>
</dbReference>
<dbReference type="HOGENOM" id="CLU_017028_12_3_6"/>
<dbReference type="OrthoDB" id="5894719at2"/>
<dbReference type="Proteomes" id="UP000007966">
    <property type="component" value="Chromosome"/>
</dbReference>
<dbReference type="GO" id="GO:0003677">
    <property type="term" value="F:DNA binding"/>
    <property type="evidence" value="ECO:0007669"/>
    <property type="project" value="UniProtKB-KW"/>
</dbReference>
<dbReference type="GO" id="GO:1904680">
    <property type="term" value="F:peptide transmembrane transporter activity"/>
    <property type="evidence" value="ECO:0007669"/>
    <property type="project" value="TreeGrafter"/>
</dbReference>
<dbReference type="GO" id="GO:0045892">
    <property type="term" value="P:negative regulation of DNA-templated transcription"/>
    <property type="evidence" value="ECO:0007669"/>
    <property type="project" value="UniProtKB-UniRule"/>
</dbReference>
<dbReference type="GO" id="GO:0015833">
    <property type="term" value="P:peptide transport"/>
    <property type="evidence" value="ECO:0007669"/>
    <property type="project" value="TreeGrafter"/>
</dbReference>
<dbReference type="GO" id="GO:0045893">
    <property type="term" value="P:positive regulation of DNA-templated transcription"/>
    <property type="evidence" value="ECO:0007669"/>
    <property type="project" value="UniProtKB-UniRule"/>
</dbReference>
<dbReference type="CDD" id="cd08507">
    <property type="entry name" value="PBP2_SgrR_like"/>
    <property type="match status" value="1"/>
</dbReference>
<dbReference type="FunFam" id="3.40.190.10:FF:000070">
    <property type="entry name" value="HTH-type transcriptional regulator SgrR"/>
    <property type="match status" value="1"/>
</dbReference>
<dbReference type="Gene3D" id="3.40.190.10">
    <property type="entry name" value="Periplasmic binding protein-like II"/>
    <property type="match status" value="1"/>
</dbReference>
<dbReference type="HAMAP" id="MF_01449">
    <property type="entry name" value="HTH_type_SgrR"/>
    <property type="match status" value="1"/>
</dbReference>
<dbReference type="InterPro" id="IPR039424">
    <property type="entry name" value="SBP_5"/>
</dbReference>
<dbReference type="InterPro" id="IPR000914">
    <property type="entry name" value="SBP_5_dom"/>
</dbReference>
<dbReference type="InterPro" id="IPR025370">
    <property type="entry name" value="SgrR_HTH_N"/>
</dbReference>
<dbReference type="InterPro" id="IPR023767">
    <property type="entry name" value="Tscrpt_reg_SgrR"/>
</dbReference>
<dbReference type="NCBIfam" id="NF010149">
    <property type="entry name" value="PRK13626.1"/>
    <property type="match status" value="1"/>
</dbReference>
<dbReference type="PANTHER" id="PTHR30290:SF72">
    <property type="entry name" value="HTH-TYPE TRANSCRIPTIONAL REGULATOR SGRR"/>
    <property type="match status" value="1"/>
</dbReference>
<dbReference type="PANTHER" id="PTHR30290">
    <property type="entry name" value="PERIPLASMIC BINDING COMPONENT OF ABC TRANSPORTER"/>
    <property type="match status" value="1"/>
</dbReference>
<dbReference type="Pfam" id="PF00496">
    <property type="entry name" value="SBP_bac_5"/>
    <property type="match status" value="1"/>
</dbReference>
<dbReference type="Pfam" id="PF12793">
    <property type="entry name" value="SgrR_N"/>
    <property type="match status" value="1"/>
</dbReference>
<dbReference type="SUPFAM" id="SSF53850">
    <property type="entry name" value="Periplasmic binding protein-like II"/>
    <property type="match status" value="1"/>
</dbReference>
<organism>
    <name type="scientific">Pectobacterium atrosepticum (strain SCRI 1043 / ATCC BAA-672)</name>
    <name type="common">Erwinia carotovora subsp. atroseptica</name>
    <dbReference type="NCBI Taxonomy" id="218491"/>
    <lineage>
        <taxon>Bacteria</taxon>
        <taxon>Pseudomonadati</taxon>
        <taxon>Pseudomonadota</taxon>
        <taxon>Gammaproteobacteria</taxon>
        <taxon>Enterobacterales</taxon>
        <taxon>Pectobacteriaceae</taxon>
        <taxon>Pectobacterium</taxon>
    </lineage>
</organism>
<proteinExistence type="inferred from homology"/>
<accession>Q6D0F8</accession>
<comment type="function">
    <text evidence="1">Activates the small RNA gene sgrS under glucose-phosphate stress conditions as well as yfdZ. Represses its own transcription under both stress and non-stress conditions. Might act as a sensor of the intracellular accumulation of phosphoglucose by binding these molecules in its C-terminal solute-binding domain.</text>
</comment>